<keyword id="KW-0217">Developmental protein</keyword>
<keyword id="KW-0325">Glycoprotein</keyword>
<keyword id="KW-1185">Reference proteome</keyword>
<keyword id="KW-0964">Secreted</keyword>
<keyword id="KW-0732">Signal</keyword>
<gene>
    <name type="primary">y</name>
    <name type="ORF">CG3757</name>
</gene>
<reference key="1">
    <citation type="journal article" date="1986" name="EMBO J.">
        <title>Molecular analysis of the yellow locus of Drosophila.</title>
        <authorList>
            <person name="Chia W."/>
            <person name="Howes G."/>
            <person name="Martin M."/>
            <person name="Meng Y.B."/>
            <person name="Moses K."/>
            <person name="Tsubota S."/>
        </authorList>
    </citation>
    <scope>NUCLEOTIDE SEQUENCE [GENOMIC DNA]</scope>
    <scope>DISRUPTION PHENOTYPE</scope>
    <scope>FUNCTION</scope>
</reference>
<reference key="2">
    <citation type="journal article" date="1986" name="EMBO J.">
        <title>On the molecular mechanism of gypsy-induced mutations at the yellow locus of Drosophila melanogaster.</title>
        <authorList>
            <person name="Geyer P.K."/>
            <person name="Spana C."/>
            <person name="Corces V.G."/>
        </authorList>
    </citation>
    <scope>NUCLEOTIDE SEQUENCE [GENOMIC DNA]</scope>
    <scope>DISRUPTION PHENOTYPE</scope>
    <scope>FUNCTION</scope>
</reference>
<reference key="3">
    <citation type="journal article" date="2000" name="Science">
        <title>The genome sequence of Drosophila melanogaster.</title>
        <authorList>
            <person name="Adams M.D."/>
            <person name="Celniker S.E."/>
            <person name="Holt R.A."/>
            <person name="Evans C.A."/>
            <person name="Gocayne J.D."/>
            <person name="Amanatides P.G."/>
            <person name="Scherer S.E."/>
            <person name="Li P.W."/>
            <person name="Hoskins R.A."/>
            <person name="Galle R.F."/>
            <person name="George R.A."/>
            <person name="Lewis S.E."/>
            <person name="Richards S."/>
            <person name="Ashburner M."/>
            <person name="Henderson S.N."/>
            <person name="Sutton G.G."/>
            <person name="Wortman J.R."/>
            <person name="Yandell M.D."/>
            <person name="Zhang Q."/>
            <person name="Chen L.X."/>
            <person name="Brandon R.C."/>
            <person name="Rogers Y.-H.C."/>
            <person name="Blazej R.G."/>
            <person name="Champe M."/>
            <person name="Pfeiffer B.D."/>
            <person name="Wan K.H."/>
            <person name="Doyle C."/>
            <person name="Baxter E.G."/>
            <person name="Helt G."/>
            <person name="Nelson C.R."/>
            <person name="Miklos G.L.G."/>
            <person name="Abril J.F."/>
            <person name="Agbayani A."/>
            <person name="An H.-J."/>
            <person name="Andrews-Pfannkoch C."/>
            <person name="Baldwin D."/>
            <person name="Ballew R.M."/>
            <person name="Basu A."/>
            <person name="Baxendale J."/>
            <person name="Bayraktaroglu L."/>
            <person name="Beasley E.M."/>
            <person name="Beeson K.Y."/>
            <person name="Benos P.V."/>
            <person name="Berman B.P."/>
            <person name="Bhandari D."/>
            <person name="Bolshakov S."/>
            <person name="Borkova D."/>
            <person name="Botchan M.R."/>
            <person name="Bouck J."/>
            <person name="Brokstein P."/>
            <person name="Brottier P."/>
            <person name="Burtis K.C."/>
            <person name="Busam D.A."/>
            <person name="Butler H."/>
            <person name="Cadieu E."/>
            <person name="Center A."/>
            <person name="Chandra I."/>
            <person name="Cherry J.M."/>
            <person name="Cawley S."/>
            <person name="Dahlke C."/>
            <person name="Davenport L.B."/>
            <person name="Davies P."/>
            <person name="de Pablos B."/>
            <person name="Delcher A."/>
            <person name="Deng Z."/>
            <person name="Mays A.D."/>
            <person name="Dew I."/>
            <person name="Dietz S.M."/>
            <person name="Dodson K."/>
            <person name="Doup L.E."/>
            <person name="Downes M."/>
            <person name="Dugan-Rocha S."/>
            <person name="Dunkov B.C."/>
            <person name="Dunn P."/>
            <person name="Durbin K.J."/>
            <person name="Evangelista C.C."/>
            <person name="Ferraz C."/>
            <person name="Ferriera S."/>
            <person name="Fleischmann W."/>
            <person name="Fosler C."/>
            <person name="Gabrielian A.E."/>
            <person name="Garg N.S."/>
            <person name="Gelbart W.M."/>
            <person name="Glasser K."/>
            <person name="Glodek A."/>
            <person name="Gong F."/>
            <person name="Gorrell J.H."/>
            <person name="Gu Z."/>
            <person name="Guan P."/>
            <person name="Harris M."/>
            <person name="Harris N.L."/>
            <person name="Harvey D.A."/>
            <person name="Heiman T.J."/>
            <person name="Hernandez J.R."/>
            <person name="Houck J."/>
            <person name="Hostin D."/>
            <person name="Houston K.A."/>
            <person name="Howland T.J."/>
            <person name="Wei M.-H."/>
            <person name="Ibegwam C."/>
            <person name="Jalali M."/>
            <person name="Kalush F."/>
            <person name="Karpen G.H."/>
            <person name="Ke Z."/>
            <person name="Kennison J.A."/>
            <person name="Ketchum K.A."/>
            <person name="Kimmel B.E."/>
            <person name="Kodira C.D."/>
            <person name="Kraft C.L."/>
            <person name="Kravitz S."/>
            <person name="Kulp D."/>
            <person name="Lai Z."/>
            <person name="Lasko P."/>
            <person name="Lei Y."/>
            <person name="Levitsky A.A."/>
            <person name="Li J.H."/>
            <person name="Li Z."/>
            <person name="Liang Y."/>
            <person name="Lin X."/>
            <person name="Liu X."/>
            <person name="Mattei B."/>
            <person name="McIntosh T.C."/>
            <person name="McLeod M.P."/>
            <person name="McPherson D."/>
            <person name="Merkulov G."/>
            <person name="Milshina N.V."/>
            <person name="Mobarry C."/>
            <person name="Morris J."/>
            <person name="Moshrefi A."/>
            <person name="Mount S.M."/>
            <person name="Moy M."/>
            <person name="Murphy B."/>
            <person name="Murphy L."/>
            <person name="Muzny D.M."/>
            <person name="Nelson D.L."/>
            <person name="Nelson D.R."/>
            <person name="Nelson K.A."/>
            <person name="Nixon K."/>
            <person name="Nusskern D.R."/>
            <person name="Pacleb J.M."/>
            <person name="Palazzolo M."/>
            <person name="Pittman G.S."/>
            <person name="Pan S."/>
            <person name="Pollard J."/>
            <person name="Puri V."/>
            <person name="Reese M.G."/>
            <person name="Reinert K."/>
            <person name="Remington K."/>
            <person name="Saunders R.D.C."/>
            <person name="Scheeler F."/>
            <person name="Shen H."/>
            <person name="Shue B.C."/>
            <person name="Siden-Kiamos I."/>
            <person name="Simpson M."/>
            <person name="Skupski M.P."/>
            <person name="Smith T.J."/>
            <person name="Spier E."/>
            <person name="Spradling A.C."/>
            <person name="Stapleton M."/>
            <person name="Strong R."/>
            <person name="Sun E."/>
            <person name="Svirskas R."/>
            <person name="Tector C."/>
            <person name="Turner R."/>
            <person name="Venter E."/>
            <person name="Wang A.H."/>
            <person name="Wang X."/>
            <person name="Wang Z.-Y."/>
            <person name="Wassarman D.A."/>
            <person name="Weinstock G.M."/>
            <person name="Weissenbach J."/>
            <person name="Williams S.M."/>
            <person name="Woodage T."/>
            <person name="Worley K.C."/>
            <person name="Wu D."/>
            <person name="Yang S."/>
            <person name="Yao Q.A."/>
            <person name="Ye J."/>
            <person name="Yeh R.-F."/>
            <person name="Zaveri J.S."/>
            <person name="Zhan M."/>
            <person name="Zhang G."/>
            <person name="Zhao Q."/>
            <person name="Zheng L."/>
            <person name="Zheng X.H."/>
            <person name="Zhong F.N."/>
            <person name="Zhong W."/>
            <person name="Zhou X."/>
            <person name="Zhu S.C."/>
            <person name="Zhu X."/>
            <person name="Smith H.O."/>
            <person name="Gibbs R.A."/>
            <person name="Myers E.W."/>
            <person name="Rubin G.M."/>
            <person name="Venter J.C."/>
        </authorList>
    </citation>
    <scope>NUCLEOTIDE SEQUENCE [LARGE SCALE GENOMIC DNA]</scope>
    <source>
        <strain>Berkeley</strain>
    </source>
</reference>
<reference key="4">
    <citation type="journal article" date="2002" name="Genome Biol.">
        <title>Annotation of the Drosophila melanogaster euchromatic genome: a systematic review.</title>
        <authorList>
            <person name="Misra S."/>
            <person name="Crosby M.A."/>
            <person name="Mungall C.J."/>
            <person name="Matthews B.B."/>
            <person name="Campbell K.S."/>
            <person name="Hradecky P."/>
            <person name="Huang Y."/>
            <person name="Kaminker J.S."/>
            <person name="Millburn G.H."/>
            <person name="Prochnik S.E."/>
            <person name="Smith C.D."/>
            <person name="Tupy J.L."/>
            <person name="Whitfield E.J."/>
            <person name="Bayraktaroglu L."/>
            <person name="Berman B.P."/>
            <person name="Bettencourt B.R."/>
            <person name="Celniker S.E."/>
            <person name="de Grey A.D.N.J."/>
            <person name="Drysdale R.A."/>
            <person name="Harris N.L."/>
            <person name="Richter J."/>
            <person name="Russo S."/>
            <person name="Schroeder A.J."/>
            <person name="Shu S.Q."/>
            <person name="Stapleton M."/>
            <person name="Yamada C."/>
            <person name="Ashburner M."/>
            <person name="Gelbart W.M."/>
            <person name="Rubin G.M."/>
            <person name="Lewis S.E."/>
        </authorList>
    </citation>
    <scope>GENOME REANNOTATION</scope>
    <source>
        <strain>Berkeley</strain>
    </source>
</reference>
<reference key="5">
    <citation type="journal article" date="2000" name="Science">
        <title>From sequence to chromosome: the tip of the X chromosome of D. melanogaster.</title>
        <authorList>
            <person name="Benos P.V."/>
            <person name="Gatt M.K."/>
            <person name="Ashburner M."/>
            <person name="Murphy L."/>
            <person name="Harris D."/>
            <person name="Barrell B.G."/>
            <person name="Ferraz C."/>
            <person name="Vidal S."/>
            <person name="Brun C."/>
            <person name="Demailles J."/>
            <person name="Cadieu E."/>
            <person name="Dreano S."/>
            <person name="Gloux S."/>
            <person name="Lelaure V."/>
            <person name="Mottier S."/>
            <person name="Galibert F."/>
            <person name="Borkova D."/>
            <person name="Minana B."/>
            <person name="Kafatos F.C."/>
            <person name="Louis C."/>
            <person name="Siden-Kiamos I."/>
            <person name="Bolshakov S."/>
            <person name="Papagiannakis G."/>
            <person name="Spanos L."/>
            <person name="Cox S."/>
            <person name="Madueno E."/>
            <person name="de Pablos B."/>
            <person name="Modolell J."/>
            <person name="Peter A."/>
            <person name="Schoettler P."/>
            <person name="Werner M."/>
            <person name="Mourkioti F."/>
            <person name="Beinert N."/>
            <person name="Dowe G."/>
            <person name="Schaefer U."/>
            <person name="Jaeckle H."/>
            <person name="Bucheton A."/>
            <person name="Callister D.M."/>
            <person name="Campbell L.A."/>
            <person name="Darlamitsou A."/>
            <person name="Henderson N.S."/>
            <person name="McMillan P.J."/>
            <person name="Salles C."/>
            <person name="Tait E.A."/>
            <person name="Valenti P."/>
            <person name="Saunders R.D.C."/>
            <person name="Glover D.M."/>
        </authorList>
    </citation>
    <scope>NUCLEOTIDE SEQUENCE [LARGE SCALE GENOMIC DNA]</scope>
    <source>
        <strain>Oregon-R</strain>
    </source>
</reference>
<comment type="function">
    <text evidence="3 4">Controls the pigmentation pattern of the adult cuticle and larval mouth parts.</text>
</comment>
<comment type="subcellular location">
    <subcellularLocation>
        <location>Secreted</location>
    </subcellularLocation>
</comment>
<comment type="developmental stage">
    <text>Required during the later half of pupal development for the normal pigmentation of the adult cuticle.</text>
</comment>
<comment type="disruption phenotype">
    <text evidence="3 4">Flies fail to pigment the adult cuticle and larval mouth parts and show reduced level of locomotor activity and male competitive mating ability.</text>
</comment>
<comment type="similarity">
    <text evidence="5">Belongs to the major royal jelly protein family.</text>
</comment>
<feature type="signal peptide" evidence="1">
    <location>
        <begin position="1"/>
        <end position="21"/>
    </location>
</feature>
<feature type="chain" id="PRO_0000031052" description="Protein yellow">
    <location>
        <begin position="22"/>
        <end position="541"/>
    </location>
</feature>
<feature type="region of interest" description="Disordered" evidence="2">
    <location>
        <begin position="443"/>
        <end position="463"/>
    </location>
</feature>
<feature type="glycosylation site" description="N-linked (GlcNAc...) asparagine" evidence="1">
    <location>
        <position position="144"/>
    </location>
</feature>
<feature type="glycosylation site" description="N-linked (GlcNAc...) asparagine" evidence="1">
    <location>
        <position position="215"/>
    </location>
</feature>
<organism>
    <name type="scientific">Drosophila melanogaster</name>
    <name type="common">Fruit fly</name>
    <dbReference type="NCBI Taxonomy" id="7227"/>
    <lineage>
        <taxon>Eukaryota</taxon>
        <taxon>Metazoa</taxon>
        <taxon>Ecdysozoa</taxon>
        <taxon>Arthropoda</taxon>
        <taxon>Hexapoda</taxon>
        <taxon>Insecta</taxon>
        <taxon>Pterygota</taxon>
        <taxon>Neoptera</taxon>
        <taxon>Endopterygota</taxon>
        <taxon>Diptera</taxon>
        <taxon>Brachycera</taxon>
        <taxon>Muscomorpha</taxon>
        <taxon>Ephydroidea</taxon>
        <taxon>Drosophilidae</taxon>
        <taxon>Drosophila</taxon>
        <taxon>Sophophora</taxon>
    </lineage>
</organism>
<proteinExistence type="evidence at transcript level"/>
<sequence>MFQDKGWILVTLITLVTPSWAAYKLQERYSWSQLDFAFPNTRLKDQALASGDYIPQNALPVGVEHFGNRLFVTVPRWRDGIPATLTYINMDRSLTGSPELIPYPDWRSNTAGDCANSITTAYRIKVDECGRLWVLDTGTVGIGNTTTNPCPYAVNVFDLTTDTRIRRYELPGVDTNPNTFIANIAVDIGKNCDDAYAYFADELGYGLIAYSWELNKSWRFSAHSYFFPDPLRGDFNVAGINFQWGEEGIFGMSLSPIRSDGYRTLYFSPLASHRQFAVSTRILRDETRTEDSYHDFVALDERGPNSHTTSRVMSDDGIELFNLIDQNAVGCWHSSMPYSPQFHGIVDRDDVGLVFPADVKIDENKNVWVLSDRMPVFLLSDLDYSDTNFRIYTAPLATLIENTVCDLRNNAYGPPNTVSIPKQAVLPMGPPLYTKQYRPVLPQKPQTSWASSPPPPSRTYLPANSGNVVSSISVSTNSVGPAGVEVPKAYIFNQHNGINYETSGPHLFPTHQPAQPGGQDGGLKTYVNARQSGWWHHQHQG</sequence>
<protein>
    <recommendedName>
        <fullName>Protein yellow</fullName>
    </recommendedName>
</protein>
<name>YELL_DROME</name>
<evidence type="ECO:0000255" key="1"/>
<evidence type="ECO:0000256" key="2">
    <source>
        <dbReference type="SAM" id="MobiDB-lite"/>
    </source>
</evidence>
<evidence type="ECO:0000269" key="3">
    <source>
    </source>
</evidence>
<evidence type="ECO:0000269" key="4">
    <source>
    </source>
</evidence>
<evidence type="ECO:0000305" key="5"/>
<accession>P09957</accession>
<accession>Q9W5G5</accession>
<dbReference type="EMBL" id="X04427">
    <property type="protein sequence ID" value="CAA28024.1"/>
    <property type="molecule type" value="Genomic_DNA"/>
</dbReference>
<dbReference type="EMBL" id="AE014298">
    <property type="protein sequence ID" value="AAF45497.1"/>
    <property type="molecule type" value="Genomic_DNA"/>
</dbReference>
<dbReference type="EMBL" id="AL023873">
    <property type="protein sequence ID" value="CAA19640.1"/>
    <property type="molecule type" value="Genomic_DNA"/>
</dbReference>
<dbReference type="PIR" id="A25696">
    <property type="entry name" value="A25696"/>
</dbReference>
<dbReference type="RefSeq" id="NP_476792.1">
    <property type="nucleotide sequence ID" value="NM_057444.3"/>
</dbReference>
<dbReference type="SMR" id="P09957"/>
<dbReference type="BioGRID" id="57553">
    <property type="interactions" value="17"/>
</dbReference>
<dbReference type="DIP" id="DIP-23590N"/>
<dbReference type="IntAct" id="P09957">
    <property type="interactions" value="1"/>
</dbReference>
<dbReference type="STRING" id="7227.FBpp0070070"/>
<dbReference type="GlyCosmos" id="P09957">
    <property type="glycosylation" value="2 sites, No reported glycans"/>
</dbReference>
<dbReference type="GlyGen" id="P09957">
    <property type="glycosylation" value="2 sites"/>
</dbReference>
<dbReference type="PaxDb" id="7227-FBpp0070070"/>
<dbReference type="EnsemblMetazoa" id="FBtr0070071">
    <property type="protein sequence ID" value="FBpp0070070"/>
    <property type="gene ID" value="FBgn0004034"/>
</dbReference>
<dbReference type="GeneID" id="30980"/>
<dbReference type="KEGG" id="dme:Dmel_CG3757"/>
<dbReference type="UCSC" id="CG3757-RA">
    <property type="organism name" value="d. melanogaster"/>
</dbReference>
<dbReference type="AGR" id="FB:FBgn0004034"/>
<dbReference type="CTD" id="30980"/>
<dbReference type="FlyBase" id="FBgn0004034">
    <property type="gene designation" value="y"/>
</dbReference>
<dbReference type="VEuPathDB" id="VectorBase:FBgn0004034"/>
<dbReference type="eggNOG" id="ENOG502QQ50">
    <property type="taxonomic scope" value="Eukaryota"/>
</dbReference>
<dbReference type="GeneTree" id="ENSGT00530000064224"/>
<dbReference type="HOGENOM" id="CLU_503077_0_0_1"/>
<dbReference type="InParanoid" id="P09957"/>
<dbReference type="OMA" id="LIENTVC"/>
<dbReference type="OrthoDB" id="7776143at2759"/>
<dbReference type="PhylomeDB" id="P09957"/>
<dbReference type="SignaLink" id="P09957"/>
<dbReference type="BioGRID-ORCS" id="30980">
    <property type="hits" value="0 hits in 1 CRISPR screen"/>
</dbReference>
<dbReference type="GenomeRNAi" id="30980"/>
<dbReference type="PRO" id="PR:P09957"/>
<dbReference type="Proteomes" id="UP000000803">
    <property type="component" value="Chromosome X"/>
</dbReference>
<dbReference type="Bgee" id="FBgn0004034">
    <property type="expression patterns" value="Expressed in dopaminergic PAM neuron (Drosophila) in brain and 8 other cell types or tissues"/>
</dbReference>
<dbReference type="ExpressionAtlas" id="P09957">
    <property type="expression patterns" value="baseline and differential"/>
</dbReference>
<dbReference type="GO" id="GO:0070451">
    <property type="term" value="C:cell hair"/>
    <property type="evidence" value="ECO:0000314"/>
    <property type="project" value="FlyBase"/>
</dbReference>
<dbReference type="GO" id="GO:0005737">
    <property type="term" value="C:cytoplasm"/>
    <property type="evidence" value="ECO:0000314"/>
    <property type="project" value="FlyBase"/>
</dbReference>
<dbReference type="GO" id="GO:0005576">
    <property type="term" value="C:extracellular region"/>
    <property type="evidence" value="ECO:0000314"/>
    <property type="project" value="FlyBase"/>
</dbReference>
<dbReference type="GO" id="GO:0048067">
    <property type="term" value="P:cuticle pigmentation"/>
    <property type="evidence" value="ECO:0000315"/>
    <property type="project" value="FlyBase"/>
</dbReference>
<dbReference type="GO" id="GO:0048066">
    <property type="term" value="P:developmental pigmentation"/>
    <property type="evidence" value="ECO:0000315"/>
    <property type="project" value="FlyBase"/>
</dbReference>
<dbReference type="GO" id="GO:0048065">
    <property type="term" value="P:male courtship behavior, veined wing extension"/>
    <property type="evidence" value="ECO:0000315"/>
    <property type="project" value="FlyBase"/>
</dbReference>
<dbReference type="GO" id="GO:0060179">
    <property type="term" value="P:male mating behavior"/>
    <property type="evidence" value="ECO:0000315"/>
    <property type="project" value="FlyBase"/>
</dbReference>
<dbReference type="GO" id="GO:0042438">
    <property type="term" value="P:melanin biosynthetic process"/>
    <property type="evidence" value="ECO:0000315"/>
    <property type="project" value="FlyBase"/>
</dbReference>
<dbReference type="GO" id="GO:0006583">
    <property type="term" value="P:melanin biosynthetic process from tyrosine"/>
    <property type="evidence" value="ECO:0000304"/>
    <property type="project" value="FlyBase"/>
</dbReference>
<dbReference type="GO" id="GO:0048082">
    <property type="term" value="P:regulation of adult chitin-containing cuticle pigmentation"/>
    <property type="evidence" value="ECO:0000316"/>
    <property type="project" value="FlyBase"/>
</dbReference>
<dbReference type="FunFam" id="2.120.10.30:FF:000046">
    <property type="entry name" value="Blast:Protein yellow"/>
    <property type="match status" value="1"/>
</dbReference>
<dbReference type="Gene3D" id="2.120.10.30">
    <property type="entry name" value="TolB, C-terminal domain"/>
    <property type="match status" value="1"/>
</dbReference>
<dbReference type="InterPro" id="IPR011042">
    <property type="entry name" value="6-blade_b-propeller_TolB-like"/>
</dbReference>
<dbReference type="InterPro" id="IPR017996">
    <property type="entry name" value="Royal_jelly/protein_yellow"/>
</dbReference>
<dbReference type="PANTHER" id="PTHR10009:SF14">
    <property type="entry name" value="PROTEIN YELLOW"/>
    <property type="match status" value="1"/>
</dbReference>
<dbReference type="PANTHER" id="PTHR10009">
    <property type="entry name" value="PROTEIN YELLOW-RELATED"/>
    <property type="match status" value="1"/>
</dbReference>
<dbReference type="Pfam" id="PF03022">
    <property type="entry name" value="MRJP"/>
    <property type="match status" value="1"/>
</dbReference>
<dbReference type="PRINTS" id="PR01366">
    <property type="entry name" value="ROYALJELLY"/>
</dbReference>